<reference key="1">
    <citation type="journal article" date="2003" name="Proc. Natl. Acad. Sci. U.S.A.">
        <title>The complete genome sequence of Mycobacterium bovis.</title>
        <authorList>
            <person name="Garnier T."/>
            <person name="Eiglmeier K."/>
            <person name="Camus J.-C."/>
            <person name="Medina N."/>
            <person name="Mansoor H."/>
            <person name="Pryor M."/>
            <person name="Duthoy S."/>
            <person name="Grondin S."/>
            <person name="Lacroix C."/>
            <person name="Monsempe C."/>
            <person name="Simon S."/>
            <person name="Harris B."/>
            <person name="Atkin R."/>
            <person name="Doggett J."/>
            <person name="Mayes R."/>
            <person name="Keating L."/>
            <person name="Wheeler P.R."/>
            <person name="Parkhill J."/>
            <person name="Barrell B.G."/>
            <person name="Cole S.T."/>
            <person name="Gordon S.V."/>
            <person name="Hewinson R.G."/>
        </authorList>
    </citation>
    <scope>NUCLEOTIDE SEQUENCE [LARGE SCALE GENOMIC DNA]</scope>
    <source>
        <strain>ATCC BAA-935 / AF2122/97</strain>
    </source>
</reference>
<reference key="2">
    <citation type="journal article" date="2017" name="Genome Announc.">
        <title>Updated reference genome sequence and annotation of Mycobacterium bovis AF2122/97.</title>
        <authorList>
            <person name="Malone K.M."/>
            <person name="Farrell D."/>
            <person name="Stuber T.P."/>
            <person name="Schubert O.T."/>
            <person name="Aebersold R."/>
            <person name="Robbe-Austerman S."/>
            <person name="Gordon S.V."/>
        </authorList>
    </citation>
    <scope>NUCLEOTIDE SEQUENCE [LARGE SCALE GENOMIC DNA]</scope>
    <scope>GENOME REANNOTATION</scope>
    <source>
        <strain>ATCC BAA-935 / AF2122/97</strain>
    </source>
</reference>
<gene>
    <name evidence="1" type="primary">tsf</name>
    <name type="ordered locus">BQ2027_MB2913C</name>
</gene>
<dbReference type="EMBL" id="LT708304">
    <property type="protein sequence ID" value="SIU01534.1"/>
    <property type="molecule type" value="Genomic_DNA"/>
</dbReference>
<dbReference type="RefSeq" id="NP_856558.1">
    <property type="nucleotide sequence ID" value="NC_002945.3"/>
</dbReference>
<dbReference type="RefSeq" id="WP_010950794.1">
    <property type="nucleotide sequence ID" value="NC_002945.4"/>
</dbReference>
<dbReference type="SMR" id="Q7TXN0"/>
<dbReference type="KEGG" id="mbo:BQ2027_MB2913C"/>
<dbReference type="PATRIC" id="fig|233413.5.peg.3197"/>
<dbReference type="Proteomes" id="UP000001419">
    <property type="component" value="Chromosome"/>
</dbReference>
<dbReference type="GO" id="GO:0005737">
    <property type="term" value="C:cytoplasm"/>
    <property type="evidence" value="ECO:0007669"/>
    <property type="project" value="UniProtKB-SubCell"/>
</dbReference>
<dbReference type="GO" id="GO:0003746">
    <property type="term" value="F:translation elongation factor activity"/>
    <property type="evidence" value="ECO:0007669"/>
    <property type="project" value="UniProtKB-UniRule"/>
</dbReference>
<dbReference type="CDD" id="cd14275">
    <property type="entry name" value="UBA_EF-Ts"/>
    <property type="match status" value="1"/>
</dbReference>
<dbReference type="FunFam" id="1.10.286.20:FF:000001">
    <property type="entry name" value="Elongation factor Ts"/>
    <property type="match status" value="1"/>
</dbReference>
<dbReference type="FunFam" id="1.10.8.10:FF:000001">
    <property type="entry name" value="Elongation factor Ts"/>
    <property type="match status" value="1"/>
</dbReference>
<dbReference type="FunFam" id="3.30.479.20:FF:000021">
    <property type="entry name" value="Elongation factor Ts"/>
    <property type="match status" value="1"/>
</dbReference>
<dbReference type="Gene3D" id="1.10.286.20">
    <property type="match status" value="1"/>
</dbReference>
<dbReference type="Gene3D" id="1.10.8.10">
    <property type="entry name" value="DNA helicase RuvA subunit, C-terminal domain"/>
    <property type="match status" value="1"/>
</dbReference>
<dbReference type="Gene3D" id="3.30.479.20">
    <property type="entry name" value="Elongation factor Ts, dimerisation domain"/>
    <property type="match status" value="2"/>
</dbReference>
<dbReference type="HAMAP" id="MF_00050">
    <property type="entry name" value="EF_Ts"/>
    <property type="match status" value="1"/>
</dbReference>
<dbReference type="InterPro" id="IPR036402">
    <property type="entry name" value="EF-Ts_dimer_sf"/>
</dbReference>
<dbReference type="InterPro" id="IPR001816">
    <property type="entry name" value="Transl_elong_EFTs/EF1B"/>
</dbReference>
<dbReference type="InterPro" id="IPR014039">
    <property type="entry name" value="Transl_elong_EFTs/EF1B_dimer"/>
</dbReference>
<dbReference type="InterPro" id="IPR018101">
    <property type="entry name" value="Transl_elong_Ts_CS"/>
</dbReference>
<dbReference type="InterPro" id="IPR009060">
    <property type="entry name" value="UBA-like_sf"/>
</dbReference>
<dbReference type="NCBIfam" id="TIGR00116">
    <property type="entry name" value="tsf"/>
    <property type="match status" value="1"/>
</dbReference>
<dbReference type="PANTHER" id="PTHR11741">
    <property type="entry name" value="ELONGATION FACTOR TS"/>
    <property type="match status" value="1"/>
</dbReference>
<dbReference type="PANTHER" id="PTHR11741:SF0">
    <property type="entry name" value="ELONGATION FACTOR TS, MITOCHONDRIAL"/>
    <property type="match status" value="1"/>
</dbReference>
<dbReference type="Pfam" id="PF00889">
    <property type="entry name" value="EF_TS"/>
    <property type="match status" value="1"/>
</dbReference>
<dbReference type="SUPFAM" id="SSF54713">
    <property type="entry name" value="Elongation factor Ts (EF-Ts), dimerisation domain"/>
    <property type="match status" value="2"/>
</dbReference>
<dbReference type="SUPFAM" id="SSF46934">
    <property type="entry name" value="UBA-like"/>
    <property type="match status" value="1"/>
</dbReference>
<dbReference type="PROSITE" id="PS01126">
    <property type="entry name" value="EF_TS_1"/>
    <property type="match status" value="1"/>
</dbReference>
<dbReference type="PROSITE" id="PS01127">
    <property type="entry name" value="EF_TS_2"/>
    <property type="match status" value="1"/>
</dbReference>
<name>EFTS_MYCBO</name>
<comment type="function">
    <text evidence="1">Associates with the EF-Tu.GDP complex and induces the exchange of GDP to GTP. It remains bound to the aminoacyl-tRNA.EF-Tu.GTP complex up to the GTP hydrolysis stage on the ribosome.</text>
</comment>
<comment type="subcellular location">
    <subcellularLocation>
        <location evidence="1">Cytoplasm</location>
    </subcellularLocation>
</comment>
<comment type="similarity">
    <text evidence="1">Belongs to the EF-Ts family.</text>
</comment>
<protein>
    <recommendedName>
        <fullName evidence="1">Elongation factor Ts</fullName>
        <shortName evidence="1">EF-Ts</shortName>
    </recommendedName>
</protein>
<sequence length="271" mass="28785">MANFTAADVKRLRELTGAGMLACKNALAETDGDFDKAVEALRIKGAKDVGKRAERATAEGLVAAKDGALIELNCETDFVAKNAEFQTLADQVVAAAAAAKPADVDALKGASIGDKTVEQAIAELSAKIGEKLELRRVAIFDGTVEAYLHRRSADLPPAVGVLVEYRGDDAAAAHAVALQIAALRARYLSRDDVPEDIVASERRIAEETARAEGKPEQALPKIVEGRLNGFFKDAVLLEQASVSDNKKTVKALLDVAGVMVTRFVRFEVGQA</sequence>
<feature type="chain" id="PRO_0000161149" description="Elongation factor Ts">
    <location>
        <begin position="1"/>
        <end position="271"/>
    </location>
</feature>
<feature type="region of interest" description="Involved in Mg(2+) ion dislocation from EF-Tu" evidence="1">
    <location>
        <begin position="76"/>
        <end position="79"/>
    </location>
</feature>
<accession>Q7TXN0</accession>
<accession>A0A1R3Y2I6</accession>
<accession>X2BMB3</accession>
<evidence type="ECO:0000255" key="1">
    <source>
        <dbReference type="HAMAP-Rule" id="MF_00050"/>
    </source>
</evidence>
<keyword id="KW-0963">Cytoplasm</keyword>
<keyword id="KW-0251">Elongation factor</keyword>
<keyword id="KW-0648">Protein biosynthesis</keyword>
<keyword id="KW-1185">Reference proteome</keyword>
<organism>
    <name type="scientific">Mycobacterium bovis (strain ATCC BAA-935 / AF2122/97)</name>
    <dbReference type="NCBI Taxonomy" id="233413"/>
    <lineage>
        <taxon>Bacteria</taxon>
        <taxon>Bacillati</taxon>
        <taxon>Actinomycetota</taxon>
        <taxon>Actinomycetes</taxon>
        <taxon>Mycobacteriales</taxon>
        <taxon>Mycobacteriaceae</taxon>
        <taxon>Mycobacterium</taxon>
        <taxon>Mycobacterium tuberculosis complex</taxon>
    </lineage>
</organism>
<proteinExistence type="inferred from homology"/>